<accession>Q54HT5</accession>
<dbReference type="EMBL" id="AAFI02000131">
    <property type="protein sequence ID" value="EAL62856.1"/>
    <property type="molecule type" value="Genomic_DNA"/>
</dbReference>
<dbReference type="RefSeq" id="XP_636354.1">
    <property type="nucleotide sequence ID" value="XM_631262.1"/>
</dbReference>
<dbReference type="SMR" id="Q54HT5"/>
<dbReference type="PaxDb" id="44689-DDB0219414"/>
<dbReference type="EnsemblProtists" id="EAL62856">
    <property type="protein sequence ID" value="EAL62856"/>
    <property type="gene ID" value="DDB_G0289245"/>
</dbReference>
<dbReference type="GeneID" id="8627027"/>
<dbReference type="KEGG" id="ddi:DDB_G0289245"/>
<dbReference type="dictyBase" id="DDB_G0289245"/>
<dbReference type="HOGENOM" id="CLU_193137_2_0_1"/>
<dbReference type="InParanoid" id="Q54HT5"/>
<dbReference type="OMA" id="MAKHEMT"/>
<dbReference type="PRO" id="PR:Q54HT5"/>
<dbReference type="Proteomes" id="UP000002195">
    <property type="component" value="Chromosome 5"/>
</dbReference>
<protein>
    <recommendedName>
        <fullName>Putative uncharacterized protein DDB_G0289245</fullName>
    </recommendedName>
</protein>
<feature type="chain" id="PRO_0000346953" description="Putative uncharacterized protein DDB_G0289245">
    <location>
        <begin position="1"/>
        <end position="54"/>
    </location>
</feature>
<feature type="region of interest" description="Disordered" evidence="1">
    <location>
        <begin position="1"/>
        <end position="54"/>
    </location>
</feature>
<feature type="compositionally biased region" description="Low complexity" evidence="1">
    <location>
        <begin position="28"/>
        <end position="54"/>
    </location>
</feature>
<sequence>MSKKSTPMTKDAASRIQSSAAKSGGDVSSGSFASRAQSAAAINANNTSNSTGKK</sequence>
<organism>
    <name type="scientific">Dictyostelium discoideum</name>
    <name type="common">Social amoeba</name>
    <dbReference type="NCBI Taxonomy" id="44689"/>
    <lineage>
        <taxon>Eukaryota</taxon>
        <taxon>Amoebozoa</taxon>
        <taxon>Evosea</taxon>
        <taxon>Eumycetozoa</taxon>
        <taxon>Dictyostelia</taxon>
        <taxon>Dictyosteliales</taxon>
        <taxon>Dictyosteliaceae</taxon>
        <taxon>Dictyostelium</taxon>
    </lineage>
</organism>
<evidence type="ECO:0000256" key="1">
    <source>
        <dbReference type="SAM" id="MobiDB-lite"/>
    </source>
</evidence>
<gene>
    <name type="ORF">DDB_G0289245</name>
</gene>
<keyword id="KW-1185">Reference proteome</keyword>
<reference key="1">
    <citation type="journal article" date="2005" name="Nature">
        <title>The genome of the social amoeba Dictyostelium discoideum.</title>
        <authorList>
            <person name="Eichinger L."/>
            <person name="Pachebat J.A."/>
            <person name="Gloeckner G."/>
            <person name="Rajandream M.A."/>
            <person name="Sucgang R."/>
            <person name="Berriman M."/>
            <person name="Song J."/>
            <person name="Olsen R."/>
            <person name="Szafranski K."/>
            <person name="Xu Q."/>
            <person name="Tunggal B."/>
            <person name="Kummerfeld S."/>
            <person name="Madera M."/>
            <person name="Konfortov B.A."/>
            <person name="Rivero F."/>
            <person name="Bankier A.T."/>
            <person name="Lehmann R."/>
            <person name="Hamlin N."/>
            <person name="Davies R."/>
            <person name="Gaudet P."/>
            <person name="Fey P."/>
            <person name="Pilcher K."/>
            <person name="Chen G."/>
            <person name="Saunders D."/>
            <person name="Sodergren E.J."/>
            <person name="Davis P."/>
            <person name="Kerhornou A."/>
            <person name="Nie X."/>
            <person name="Hall N."/>
            <person name="Anjard C."/>
            <person name="Hemphill L."/>
            <person name="Bason N."/>
            <person name="Farbrother P."/>
            <person name="Desany B."/>
            <person name="Just E."/>
            <person name="Morio T."/>
            <person name="Rost R."/>
            <person name="Churcher C.M."/>
            <person name="Cooper J."/>
            <person name="Haydock S."/>
            <person name="van Driessche N."/>
            <person name="Cronin A."/>
            <person name="Goodhead I."/>
            <person name="Muzny D.M."/>
            <person name="Mourier T."/>
            <person name="Pain A."/>
            <person name="Lu M."/>
            <person name="Harper D."/>
            <person name="Lindsay R."/>
            <person name="Hauser H."/>
            <person name="James K.D."/>
            <person name="Quiles M."/>
            <person name="Madan Babu M."/>
            <person name="Saito T."/>
            <person name="Buchrieser C."/>
            <person name="Wardroper A."/>
            <person name="Felder M."/>
            <person name="Thangavelu M."/>
            <person name="Johnson D."/>
            <person name="Knights A."/>
            <person name="Loulseged H."/>
            <person name="Mungall K.L."/>
            <person name="Oliver K."/>
            <person name="Price C."/>
            <person name="Quail M.A."/>
            <person name="Urushihara H."/>
            <person name="Hernandez J."/>
            <person name="Rabbinowitsch E."/>
            <person name="Steffen D."/>
            <person name="Sanders M."/>
            <person name="Ma J."/>
            <person name="Kohara Y."/>
            <person name="Sharp S."/>
            <person name="Simmonds M.N."/>
            <person name="Spiegler S."/>
            <person name="Tivey A."/>
            <person name="Sugano S."/>
            <person name="White B."/>
            <person name="Walker D."/>
            <person name="Woodward J.R."/>
            <person name="Winckler T."/>
            <person name="Tanaka Y."/>
            <person name="Shaulsky G."/>
            <person name="Schleicher M."/>
            <person name="Weinstock G.M."/>
            <person name="Rosenthal A."/>
            <person name="Cox E.C."/>
            <person name="Chisholm R.L."/>
            <person name="Gibbs R.A."/>
            <person name="Loomis W.F."/>
            <person name="Platzer M."/>
            <person name="Kay R.R."/>
            <person name="Williams J.G."/>
            <person name="Dear P.H."/>
            <person name="Noegel A.A."/>
            <person name="Barrell B.G."/>
            <person name="Kuspa A."/>
        </authorList>
    </citation>
    <scope>NUCLEOTIDE SEQUENCE [LARGE SCALE GENOMIC DNA]</scope>
    <source>
        <strain>AX4</strain>
    </source>
</reference>
<proteinExistence type="predicted"/>
<name>Y9414_DICDI</name>